<reference key="1">
    <citation type="journal article" date="2007" name="Proc. Natl. Acad. Sci. U.S.A.">
        <title>Genome sequencing and comparative analysis of Saccharomyces cerevisiae strain YJM789.</title>
        <authorList>
            <person name="Wei W."/>
            <person name="McCusker J.H."/>
            <person name="Hyman R.W."/>
            <person name="Jones T."/>
            <person name="Ning Y."/>
            <person name="Cao Z."/>
            <person name="Gu Z."/>
            <person name="Bruno D."/>
            <person name="Miranda M."/>
            <person name="Nguyen M."/>
            <person name="Wilhelmy J."/>
            <person name="Komp C."/>
            <person name="Tamse R."/>
            <person name="Wang X."/>
            <person name="Jia P."/>
            <person name="Luedi P."/>
            <person name="Oefner P.J."/>
            <person name="David L."/>
            <person name="Dietrich F.S."/>
            <person name="Li Y."/>
            <person name="Davis R.W."/>
            <person name="Steinmetz L.M."/>
        </authorList>
    </citation>
    <scope>NUCLEOTIDE SEQUENCE [LARGE SCALE GENOMIC DNA]</scope>
    <source>
        <strain>YJM789</strain>
    </source>
</reference>
<accession>A6ZU08</accession>
<proteinExistence type="inferred from homology"/>
<comment type="function">
    <text evidence="1">One of the three SNF1 protein kinases (with SAK1 and ELM1) which are required for growth on nonfermentable carbon sources and nonpreferred sugars and for response to environmental stress. Activates SNF1 by phosphorylation of its activation-loop 'Thr-210'. Required for the regulation by SNF1 of the transcription of a large set of genes, the modification the activity of metabolic enzymes, and the control of various nutrient-responsive cellular developmental processes. Also phosphorylates GAL83, MIG1 and SIP2 (By similarity).</text>
</comment>
<comment type="catalytic activity">
    <reaction>
        <text>L-seryl-[protein] + ATP = O-phospho-L-seryl-[protein] + ADP + H(+)</text>
        <dbReference type="Rhea" id="RHEA:17989"/>
        <dbReference type="Rhea" id="RHEA-COMP:9863"/>
        <dbReference type="Rhea" id="RHEA-COMP:11604"/>
        <dbReference type="ChEBI" id="CHEBI:15378"/>
        <dbReference type="ChEBI" id="CHEBI:29999"/>
        <dbReference type="ChEBI" id="CHEBI:30616"/>
        <dbReference type="ChEBI" id="CHEBI:83421"/>
        <dbReference type="ChEBI" id="CHEBI:456216"/>
        <dbReference type="EC" id="2.7.11.1"/>
    </reaction>
</comment>
<comment type="catalytic activity">
    <reaction>
        <text>L-threonyl-[protein] + ATP = O-phospho-L-threonyl-[protein] + ADP + H(+)</text>
        <dbReference type="Rhea" id="RHEA:46608"/>
        <dbReference type="Rhea" id="RHEA-COMP:11060"/>
        <dbReference type="Rhea" id="RHEA-COMP:11605"/>
        <dbReference type="ChEBI" id="CHEBI:15378"/>
        <dbReference type="ChEBI" id="CHEBI:30013"/>
        <dbReference type="ChEBI" id="CHEBI:30616"/>
        <dbReference type="ChEBI" id="CHEBI:61977"/>
        <dbReference type="ChEBI" id="CHEBI:456216"/>
        <dbReference type="EC" id="2.7.11.1"/>
    </reaction>
</comment>
<comment type="domain">
    <text evidence="1">The C-terminus (residues 351 to 560) is required for efficient SNF1 pathway signaling.</text>
</comment>
<comment type="PTM">
    <text evidence="1">Autophosphorylated.</text>
</comment>
<comment type="similarity">
    <text evidence="2">Belongs to the protein kinase superfamily. Ser/Thr protein kinase family.</text>
</comment>
<organism>
    <name type="scientific">Saccharomyces cerevisiae (strain YJM789)</name>
    <name type="common">Baker's yeast</name>
    <dbReference type="NCBI Taxonomy" id="307796"/>
    <lineage>
        <taxon>Eukaryota</taxon>
        <taxon>Fungi</taxon>
        <taxon>Dikarya</taxon>
        <taxon>Ascomycota</taxon>
        <taxon>Saccharomycotina</taxon>
        <taxon>Saccharomycetes</taxon>
        <taxon>Saccharomycetales</taxon>
        <taxon>Saccharomycetaceae</taxon>
        <taxon>Saccharomyces</taxon>
    </lineage>
</organism>
<protein>
    <recommendedName>
        <fullName>Serine/threonine-protein kinase TOS3</fullName>
        <ecNumber>2.7.11.1</ecNumber>
    </recommendedName>
    <alternativeName>
        <fullName>Target of SBF protein 3</fullName>
    </alternativeName>
</protein>
<name>TOS3_YEAS7</name>
<feature type="chain" id="PRO_0000333464" description="Serine/threonine-protein kinase TOS3">
    <location>
        <begin position="1"/>
        <end position="560"/>
    </location>
</feature>
<feature type="domain" description="Protein kinase" evidence="2">
    <location>
        <begin position="50"/>
        <end position="344"/>
    </location>
</feature>
<feature type="active site" description="Proton acceptor" evidence="2 3">
    <location>
        <position position="189"/>
    </location>
</feature>
<feature type="binding site" evidence="2">
    <location>
        <begin position="56"/>
        <end position="64"/>
    </location>
    <ligand>
        <name>ATP</name>
        <dbReference type="ChEBI" id="CHEBI:30616"/>
    </ligand>
</feature>
<feature type="binding site" evidence="2">
    <location>
        <position position="79"/>
    </location>
    <ligand>
        <name>ATP</name>
        <dbReference type="ChEBI" id="CHEBI:30616"/>
    </ligand>
</feature>
<dbReference type="EC" id="2.7.11.1"/>
<dbReference type="EMBL" id="AAFW02000099">
    <property type="protein sequence ID" value="EDN61946.1"/>
    <property type="molecule type" value="Genomic_DNA"/>
</dbReference>
<dbReference type="SMR" id="A6ZU08"/>
<dbReference type="HOGENOM" id="CLU_484098_0_0_1"/>
<dbReference type="Proteomes" id="UP000007060">
    <property type="component" value="Unassembled WGS sequence"/>
</dbReference>
<dbReference type="GO" id="GO:0005524">
    <property type="term" value="F:ATP binding"/>
    <property type="evidence" value="ECO:0007669"/>
    <property type="project" value="UniProtKB-KW"/>
</dbReference>
<dbReference type="GO" id="GO:0106310">
    <property type="term" value="F:protein serine kinase activity"/>
    <property type="evidence" value="ECO:0007669"/>
    <property type="project" value="RHEA"/>
</dbReference>
<dbReference type="GO" id="GO:0004674">
    <property type="term" value="F:protein serine/threonine kinase activity"/>
    <property type="evidence" value="ECO:0007669"/>
    <property type="project" value="UniProtKB-KW"/>
</dbReference>
<dbReference type="CDD" id="cd14008">
    <property type="entry name" value="STKc_LKB1_CaMKK"/>
    <property type="match status" value="1"/>
</dbReference>
<dbReference type="FunFam" id="3.30.200.20:FF:000042">
    <property type="entry name" value="Aurora kinase A"/>
    <property type="match status" value="1"/>
</dbReference>
<dbReference type="FunFam" id="1.10.510.10:FF:000829">
    <property type="entry name" value="Serine/threonine-protein kinase TOS3"/>
    <property type="match status" value="1"/>
</dbReference>
<dbReference type="Gene3D" id="1.10.510.10">
    <property type="entry name" value="Transferase(Phosphotransferase) domain 1"/>
    <property type="match status" value="1"/>
</dbReference>
<dbReference type="InterPro" id="IPR030616">
    <property type="entry name" value="Aur-like"/>
</dbReference>
<dbReference type="InterPro" id="IPR011009">
    <property type="entry name" value="Kinase-like_dom_sf"/>
</dbReference>
<dbReference type="InterPro" id="IPR000719">
    <property type="entry name" value="Prot_kinase_dom"/>
</dbReference>
<dbReference type="InterPro" id="IPR017441">
    <property type="entry name" value="Protein_kinase_ATP_BS"/>
</dbReference>
<dbReference type="InterPro" id="IPR008271">
    <property type="entry name" value="Ser/Thr_kinase_AS"/>
</dbReference>
<dbReference type="PANTHER" id="PTHR24350">
    <property type="entry name" value="SERINE/THREONINE-PROTEIN KINASE IAL-RELATED"/>
    <property type="match status" value="1"/>
</dbReference>
<dbReference type="Pfam" id="PF00069">
    <property type="entry name" value="Pkinase"/>
    <property type="match status" value="1"/>
</dbReference>
<dbReference type="SMART" id="SM00220">
    <property type="entry name" value="S_TKc"/>
    <property type="match status" value="1"/>
</dbReference>
<dbReference type="SUPFAM" id="SSF56112">
    <property type="entry name" value="Protein kinase-like (PK-like)"/>
    <property type="match status" value="1"/>
</dbReference>
<dbReference type="PROSITE" id="PS00107">
    <property type="entry name" value="PROTEIN_KINASE_ATP"/>
    <property type="match status" value="1"/>
</dbReference>
<dbReference type="PROSITE" id="PS50011">
    <property type="entry name" value="PROTEIN_KINASE_DOM"/>
    <property type="match status" value="1"/>
</dbReference>
<dbReference type="PROSITE" id="PS00108">
    <property type="entry name" value="PROTEIN_KINASE_ST"/>
    <property type="match status" value="1"/>
</dbReference>
<gene>
    <name type="primary">TOS3</name>
    <name type="ORF">SCY_1891</name>
</gene>
<sequence>MVLLKEPVQPLPRSSLLYNNASNSSSRIKETRKVKLLYNPLTKRQILNNFEILATLGNGQYGKVKLARDLGTGALVAIKILNRFEKRSGYSLQLKVENPRVNQEIEVMKRCHHENVVELYEILNDPESTKVYLVLEYCSRGPVKWCPENKMEIKAVGPSILTFQQSRKVVLDVVSGLEYLHSQGITHRDIKPSNLLISSNGTVKISDFGVAMSTATGSTNIQSSHEQLLKSRALGTPAFFAPELCSTEKEYSCSSAIDIWSLGVTIYCLLFGKLPFNANSGLELFDSIINKPLEFPSYEEMLNGATSGITMEEYTDAKDLLKKLLQKDPDKRIKLADIKVHPFMCHYGKSDAASVSTNLETFHELKVSPPSSCKRVELVSLPVNSSFASLDSVYMENFDHNNLRTGADRNSTYSPSIYDANTLSPSAYHNIGSRESSYSSFSSFTSSTAFASQISIQDAPAIGDQQCLIGESGSSLRVNSCEFPQYTTMSPVGEYPFESTEASLSSTLTPVGNVPQRIKAHLVEGKSNSKDDLRIEADASLVFEASDAQRTRRRMSLYKL</sequence>
<keyword id="KW-0067">ATP-binding</keyword>
<keyword id="KW-0418">Kinase</keyword>
<keyword id="KW-0547">Nucleotide-binding</keyword>
<keyword id="KW-0597">Phosphoprotein</keyword>
<keyword id="KW-0723">Serine/threonine-protein kinase</keyword>
<keyword id="KW-0346">Stress response</keyword>
<keyword id="KW-0808">Transferase</keyword>
<evidence type="ECO:0000250" key="1"/>
<evidence type="ECO:0000255" key="2">
    <source>
        <dbReference type="PROSITE-ProRule" id="PRU00159"/>
    </source>
</evidence>
<evidence type="ECO:0000255" key="3">
    <source>
        <dbReference type="PROSITE-ProRule" id="PRU10027"/>
    </source>
</evidence>